<proteinExistence type="evidence at protein level"/>
<sequence length="898" mass="102008">MEAAEKEEISVEDEAVDKTIFKDCGKIAFYRRQKQQLTKTTTYQALLGSVDTEQDSTRFQIISEATKIPLVAEVYGIEKDIFRLKINEETPLKPRLVCSGDTGSLILTNRKGDLKCHVSANPFKIDLLSKNEAVISINSLGQLYFEHLQVPHKQRATKGNGQNTPAATSQENQEDLGLWEEKFGKFVDVKANGPSSVGLDFSLHGFEHLYGIPQHAESHQLKNTRDGDAYRLYNLDVYGYQVHDKMGIYGSVPYLLAHKQGRTVGIFWLNASETLVEINTEPAVEYTLTQMGPAAAKPKVRCRTDVHWMSESGIIDVFLLTGPTPADVFKQYSYITGTQAMPPLFSLGYHQCRWNYEDEQDVKAVDAGFDEHDIPYDVMWLDIEHTEDKKYFTWDKKRFANPKRMQELLRSKKRKLVVISDPHIKVDPDYTVYAQAKEQGFFVKNPEGGDFEGVCWPGLSSYLDFTNPKVREWYSSLFAFPVYQGSTDILFLWNDMNEPSVFRGPELTMHKSAVHYGDWEHRELHNIYGFYQQMATAEGLIQRSKGKERPFVLSRSFFAGSQKYGAVWTGDNKAEWSYLKISIPMLLTLSVSGISFCGADVGGFIGNPEAELLVRWYQAGAYQPFFRGHATMNTKRREPWLFGEEYTQLIREAIRQRYALLPYLYSLFYHTHVSSQPVMRPLWVEYPDDLETFAVEDEYMLGSALLVHPVTDPQTATIDVFLPGSDEVWYDSKTFAYWKGGCTVKIPVTLDTIPVFQRGGSVVPVKTTVGTSTGWMADSPYELRVALSTQGSAVGELYLDDGHSFQYLHQNQFLYRKFLFCSSVLTNRCANEKGHYPSKCIVEQILVLGLKKKPSSVTTHLSDGRAQPAAFTYCAETSALRLEKLSLRIGEDWEVRVG</sequence>
<gene>
    <name type="primary">Ganc</name>
</gene>
<accession>Q8BVW0</accession>
<accession>Q8BH03</accession>
<organism>
    <name type="scientific">Mus musculus</name>
    <name type="common">Mouse</name>
    <dbReference type="NCBI Taxonomy" id="10090"/>
    <lineage>
        <taxon>Eukaryota</taxon>
        <taxon>Metazoa</taxon>
        <taxon>Chordata</taxon>
        <taxon>Craniata</taxon>
        <taxon>Vertebrata</taxon>
        <taxon>Euteleostomi</taxon>
        <taxon>Mammalia</taxon>
        <taxon>Eutheria</taxon>
        <taxon>Euarchontoglires</taxon>
        <taxon>Glires</taxon>
        <taxon>Rodentia</taxon>
        <taxon>Myomorpha</taxon>
        <taxon>Muroidea</taxon>
        <taxon>Muridae</taxon>
        <taxon>Murinae</taxon>
        <taxon>Mus</taxon>
        <taxon>Mus</taxon>
    </lineage>
</organism>
<reference key="1">
    <citation type="journal article" date="2005" name="Science">
        <title>The transcriptional landscape of the mammalian genome.</title>
        <authorList>
            <person name="Carninci P."/>
            <person name="Kasukawa T."/>
            <person name="Katayama S."/>
            <person name="Gough J."/>
            <person name="Frith M.C."/>
            <person name="Maeda N."/>
            <person name="Oyama R."/>
            <person name="Ravasi T."/>
            <person name="Lenhard B."/>
            <person name="Wells C."/>
            <person name="Kodzius R."/>
            <person name="Shimokawa K."/>
            <person name="Bajic V.B."/>
            <person name="Brenner S.E."/>
            <person name="Batalov S."/>
            <person name="Forrest A.R."/>
            <person name="Zavolan M."/>
            <person name="Davis M.J."/>
            <person name="Wilming L.G."/>
            <person name="Aidinis V."/>
            <person name="Allen J.E."/>
            <person name="Ambesi-Impiombato A."/>
            <person name="Apweiler R."/>
            <person name="Aturaliya R.N."/>
            <person name="Bailey T.L."/>
            <person name="Bansal M."/>
            <person name="Baxter L."/>
            <person name="Beisel K.W."/>
            <person name="Bersano T."/>
            <person name="Bono H."/>
            <person name="Chalk A.M."/>
            <person name="Chiu K.P."/>
            <person name="Choudhary V."/>
            <person name="Christoffels A."/>
            <person name="Clutterbuck D.R."/>
            <person name="Crowe M.L."/>
            <person name="Dalla E."/>
            <person name="Dalrymple B.P."/>
            <person name="de Bono B."/>
            <person name="Della Gatta G."/>
            <person name="di Bernardo D."/>
            <person name="Down T."/>
            <person name="Engstrom P."/>
            <person name="Fagiolini M."/>
            <person name="Faulkner G."/>
            <person name="Fletcher C.F."/>
            <person name="Fukushima T."/>
            <person name="Furuno M."/>
            <person name="Futaki S."/>
            <person name="Gariboldi M."/>
            <person name="Georgii-Hemming P."/>
            <person name="Gingeras T.R."/>
            <person name="Gojobori T."/>
            <person name="Green R.E."/>
            <person name="Gustincich S."/>
            <person name="Harbers M."/>
            <person name="Hayashi Y."/>
            <person name="Hensch T.K."/>
            <person name="Hirokawa N."/>
            <person name="Hill D."/>
            <person name="Huminiecki L."/>
            <person name="Iacono M."/>
            <person name="Ikeo K."/>
            <person name="Iwama A."/>
            <person name="Ishikawa T."/>
            <person name="Jakt M."/>
            <person name="Kanapin A."/>
            <person name="Katoh M."/>
            <person name="Kawasawa Y."/>
            <person name="Kelso J."/>
            <person name="Kitamura H."/>
            <person name="Kitano H."/>
            <person name="Kollias G."/>
            <person name="Krishnan S.P."/>
            <person name="Kruger A."/>
            <person name="Kummerfeld S.K."/>
            <person name="Kurochkin I.V."/>
            <person name="Lareau L.F."/>
            <person name="Lazarevic D."/>
            <person name="Lipovich L."/>
            <person name="Liu J."/>
            <person name="Liuni S."/>
            <person name="McWilliam S."/>
            <person name="Madan Babu M."/>
            <person name="Madera M."/>
            <person name="Marchionni L."/>
            <person name="Matsuda H."/>
            <person name="Matsuzawa S."/>
            <person name="Miki H."/>
            <person name="Mignone F."/>
            <person name="Miyake S."/>
            <person name="Morris K."/>
            <person name="Mottagui-Tabar S."/>
            <person name="Mulder N."/>
            <person name="Nakano N."/>
            <person name="Nakauchi H."/>
            <person name="Ng P."/>
            <person name="Nilsson R."/>
            <person name="Nishiguchi S."/>
            <person name="Nishikawa S."/>
            <person name="Nori F."/>
            <person name="Ohara O."/>
            <person name="Okazaki Y."/>
            <person name="Orlando V."/>
            <person name="Pang K.C."/>
            <person name="Pavan W.J."/>
            <person name="Pavesi G."/>
            <person name="Pesole G."/>
            <person name="Petrovsky N."/>
            <person name="Piazza S."/>
            <person name="Reed J."/>
            <person name="Reid J.F."/>
            <person name="Ring B.Z."/>
            <person name="Ringwald M."/>
            <person name="Rost B."/>
            <person name="Ruan Y."/>
            <person name="Salzberg S.L."/>
            <person name="Sandelin A."/>
            <person name="Schneider C."/>
            <person name="Schoenbach C."/>
            <person name="Sekiguchi K."/>
            <person name="Semple C.A."/>
            <person name="Seno S."/>
            <person name="Sessa L."/>
            <person name="Sheng Y."/>
            <person name="Shibata Y."/>
            <person name="Shimada H."/>
            <person name="Shimada K."/>
            <person name="Silva D."/>
            <person name="Sinclair B."/>
            <person name="Sperling S."/>
            <person name="Stupka E."/>
            <person name="Sugiura K."/>
            <person name="Sultana R."/>
            <person name="Takenaka Y."/>
            <person name="Taki K."/>
            <person name="Tammoja K."/>
            <person name="Tan S.L."/>
            <person name="Tang S."/>
            <person name="Taylor M.S."/>
            <person name="Tegner J."/>
            <person name="Teichmann S.A."/>
            <person name="Ueda H.R."/>
            <person name="van Nimwegen E."/>
            <person name="Verardo R."/>
            <person name="Wei C.L."/>
            <person name="Yagi K."/>
            <person name="Yamanishi H."/>
            <person name="Zabarovsky E."/>
            <person name="Zhu S."/>
            <person name="Zimmer A."/>
            <person name="Hide W."/>
            <person name="Bult C."/>
            <person name="Grimmond S.M."/>
            <person name="Teasdale R.D."/>
            <person name="Liu E.T."/>
            <person name="Brusic V."/>
            <person name="Quackenbush J."/>
            <person name="Wahlestedt C."/>
            <person name="Mattick J.S."/>
            <person name="Hume D.A."/>
            <person name="Kai C."/>
            <person name="Sasaki D."/>
            <person name="Tomaru Y."/>
            <person name="Fukuda S."/>
            <person name="Kanamori-Katayama M."/>
            <person name="Suzuki M."/>
            <person name="Aoki J."/>
            <person name="Arakawa T."/>
            <person name="Iida J."/>
            <person name="Imamura K."/>
            <person name="Itoh M."/>
            <person name="Kato T."/>
            <person name="Kawaji H."/>
            <person name="Kawagashira N."/>
            <person name="Kawashima T."/>
            <person name="Kojima M."/>
            <person name="Kondo S."/>
            <person name="Konno H."/>
            <person name="Nakano K."/>
            <person name="Ninomiya N."/>
            <person name="Nishio T."/>
            <person name="Okada M."/>
            <person name="Plessy C."/>
            <person name="Shibata K."/>
            <person name="Shiraki T."/>
            <person name="Suzuki S."/>
            <person name="Tagami M."/>
            <person name="Waki K."/>
            <person name="Watahiki A."/>
            <person name="Okamura-Oho Y."/>
            <person name="Suzuki H."/>
            <person name="Kawai J."/>
            <person name="Hayashizaki Y."/>
        </authorList>
    </citation>
    <scope>NUCLEOTIDE SEQUENCE [LARGE SCALE MRNA] (ISOFORMS 1 AND 2)</scope>
    <source>
        <strain>C57BL/6J</strain>
        <tissue>Cerebellum</tissue>
        <tissue>Diencephalon</tissue>
        <tissue>Skin</tissue>
    </source>
</reference>
<reference key="2">
    <citation type="journal article" date="2010" name="Cell">
        <title>A tissue-specific atlas of mouse protein phosphorylation and expression.</title>
        <authorList>
            <person name="Huttlin E.L."/>
            <person name="Jedrychowski M.P."/>
            <person name="Elias J.E."/>
            <person name="Goswami T."/>
            <person name="Rad R."/>
            <person name="Beausoleil S.A."/>
            <person name="Villen J."/>
            <person name="Haas W."/>
            <person name="Sowa M.E."/>
            <person name="Gygi S.P."/>
        </authorList>
    </citation>
    <scope>IDENTIFICATION BY MASS SPECTROMETRY [LARGE SCALE ANALYSIS]</scope>
    <source>
        <tissue>Brain</tissue>
        <tissue>Brown adipose tissue</tissue>
        <tissue>Heart</tissue>
        <tissue>Kidney</tissue>
        <tissue>Liver</tissue>
        <tissue>Lung</tissue>
        <tissue>Spleen</tissue>
        <tissue>Testis</tissue>
    </source>
</reference>
<name>GANC_MOUSE</name>
<feature type="chain" id="PRO_0000185366" description="Neutral alpha-glucosidase C">
    <location>
        <begin position="1"/>
        <end position="898"/>
    </location>
</feature>
<feature type="region of interest" description="Disordered" evidence="3">
    <location>
        <begin position="154"/>
        <end position="173"/>
    </location>
</feature>
<feature type="compositionally biased region" description="Polar residues" evidence="3">
    <location>
        <begin position="157"/>
        <end position="171"/>
    </location>
</feature>
<feature type="active site" description="Nucleophile" evidence="2">
    <location>
        <position position="495"/>
    </location>
</feature>
<feature type="active site" evidence="1">
    <location>
        <position position="498"/>
    </location>
</feature>
<feature type="active site" description="Proton donor" evidence="1">
    <location>
        <position position="571"/>
    </location>
</feature>
<feature type="splice variant" id="VSP_010619" description="In isoform 2." evidence="4">
    <original>R</original>
    <variation>RYEVPDVINSKLGTVR</variation>
    <location>
        <position position="95"/>
    </location>
</feature>
<feature type="splice variant" id="VSP_010620" description="In isoform 2." evidence="4">
    <original>QRATKGNGQNTPAATSQENQEDLGLWEEKFGKFVDVKANGPSSVGL</original>
    <variation>LYTLLALKIYLNGACLEYQLPWTRVFTLAQQMPYCLSFLPFPPTRL</variation>
    <location>
        <begin position="154"/>
        <end position="199"/>
    </location>
</feature>
<feature type="splice variant" id="VSP_010621" description="In isoform 2." evidence="4">
    <location>
        <begin position="200"/>
        <end position="898"/>
    </location>
</feature>
<protein>
    <recommendedName>
        <fullName>Neutral alpha-glucosidase C</fullName>
        <ecNumber>3.2.1.20</ecNumber>
    </recommendedName>
</protein>
<comment type="function">
    <text evidence="1">Has alpha-glucosidase activity.</text>
</comment>
<comment type="catalytic activity">
    <reaction>
        <text>Hydrolysis of terminal, non-reducing (1-&gt;4)-linked alpha-D-glucose residues with release of alpha-D-glucose.</text>
        <dbReference type="EC" id="3.2.1.20"/>
    </reaction>
</comment>
<comment type="alternative products">
    <event type="alternative splicing"/>
    <isoform>
        <id>Q8BVW0-1</id>
        <name>1</name>
        <sequence type="displayed"/>
    </isoform>
    <isoform>
        <id>Q8BVW0-2</id>
        <name>2</name>
        <sequence type="described" ref="VSP_010619 VSP_010620 VSP_010621"/>
    </isoform>
</comment>
<comment type="miscellaneous">
    <molecule>Isoform 2</molecule>
    <text evidence="5">May be due to an intron retention.</text>
</comment>
<comment type="similarity">
    <text evidence="5">Belongs to the glycosyl hydrolase 31 family.</text>
</comment>
<comment type="sequence caution" evidence="5">
    <conflict type="erroneous initiation">
        <sequence resource="EMBL-CDS" id="BAC36303"/>
    </conflict>
</comment>
<keyword id="KW-0025">Alternative splicing</keyword>
<keyword id="KW-0326">Glycosidase</keyword>
<keyword id="KW-0378">Hydrolase</keyword>
<keyword id="KW-1185">Reference proteome</keyword>
<dbReference type="EC" id="3.2.1.20"/>
<dbReference type="EMBL" id="AK034155">
    <property type="protein sequence ID" value="BAC28611.1"/>
    <property type="molecule type" value="mRNA"/>
</dbReference>
<dbReference type="EMBL" id="AK036238">
    <property type="protein sequence ID" value="BAC29357.1"/>
    <property type="molecule type" value="mRNA"/>
</dbReference>
<dbReference type="EMBL" id="AK076333">
    <property type="protein sequence ID" value="BAC36303.1"/>
    <property type="status" value="ALT_INIT"/>
    <property type="molecule type" value="mRNA"/>
</dbReference>
<dbReference type="RefSeq" id="NP_766260.2">
    <property type="nucleotide sequence ID" value="NM_172672.2"/>
</dbReference>
<dbReference type="SMR" id="Q8BVW0"/>
<dbReference type="FunCoup" id="Q8BVW0">
    <property type="interactions" value="463"/>
</dbReference>
<dbReference type="IntAct" id="Q8BVW0">
    <property type="interactions" value="1"/>
</dbReference>
<dbReference type="MINT" id="Q8BVW0"/>
<dbReference type="STRING" id="10090.ENSMUSP00000116898"/>
<dbReference type="BindingDB" id="Q8BVW0"/>
<dbReference type="ChEMBL" id="CHEMBL3635"/>
<dbReference type="CAZy" id="GH31">
    <property type="family name" value="Glycoside Hydrolase Family 31"/>
</dbReference>
<dbReference type="GlyGen" id="Q8BVW0">
    <property type="glycosylation" value="1 site"/>
</dbReference>
<dbReference type="iPTMnet" id="Q8BVW0"/>
<dbReference type="PhosphoSitePlus" id="Q8BVW0"/>
<dbReference type="PaxDb" id="10090-ENSMUSP00000116898"/>
<dbReference type="ProteomicsDB" id="268845">
    <molecule id="Q8BVW0-1"/>
</dbReference>
<dbReference type="ProteomicsDB" id="268846">
    <molecule id="Q8BVW0-2"/>
</dbReference>
<dbReference type="Pumba" id="Q8BVW0"/>
<dbReference type="DNASU" id="76051"/>
<dbReference type="GeneID" id="76051"/>
<dbReference type="KEGG" id="mmu:76051"/>
<dbReference type="AGR" id="MGI:1923301"/>
<dbReference type="CTD" id="2595"/>
<dbReference type="MGI" id="MGI:1923301">
    <property type="gene designation" value="Ganc"/>
</dbReference>
<dbReference type="eggNOG" id="KOG1066">
    <property type="taxonomic scope" value="Eukaryota"/>
</dbReference>
<dbReference type="InParanoid" id="Q8BVW0"/>
<dbReference type="OrthoDB" id="3237269at2759"/>
<dbReference type="BioGRID-ORCS" id="76051">
    <property type="hits" value="3 hits in 78 CRISPR screens"/>
</dbReference>
<dbReference type="ChiTaRS" id="Ganc">
    <property type="organism name" value="mouse"/>
</dbReference>
<dbReference type="PRO" id="PR:Q8BVW0"/>
<dbReference type="Proteomes" id="UP000000589">
    <property type="component" value="Unplaced"/>
</dbReference>
<dbReference type="RNAct" id="Q8BVW0">
    <property type="molecule type" value="protein"/>
</dbReference>
<dbReference type="GO" id="GO:0004558">
    <property type="term" value="F:alpha-1,4-glucosidase activity"/>
    <property type="evidence" value="ECO:0000314"/>
    <property type="project" value="MGI"/>
</dbReference>
<dbReference type="GO" id="GO:0030246">
    <property type="term" value="F:carbohydrate binding"/>
    <property type="evidence" value="ECO:0007669"/>
    <property type="project" value="InterPro"/>
</dbReference>
<dbReference type="GO" id="GO:0006006">
    <property type="term" value="P:glucose metabolic process"/>
    <property type="evidence" value="ECO:0000305"/>
    <property type="project" value="MGI"/>
</dbReference>
<dbReference type="CDD" id="cd06603">
    <property type="entry name" value="GH31_GANC_GANAB_alpha"/>
    <property type="match status" value="1"/>
</dbReference>
<dbReference type="CDD" id="cd14752">
    <property type="entry name" value="GH31_N"/>
    <property type="match status" value="1"/>
</dbReference>
<dbReference type="FunFam" id="3.20.20.80:FF:000046">
    <property type="entry name" value="Glucosidase alpha, neutral C"/>
    <property type="match status" value="1"/>
</dbReference>
<dbReference type="FunFam" id="3.20.20.80:FF:000039">
    <property type="entry name" value="Glucosidase, alpha neutral C"/>
    <property type="match status" value="1"/>
</dbReference>
<dbReference type="FunFam" id="2.60.40.1180:FF:000023">
    <property type="entry name" value="neutral alpha-glucosidase AB isoform X2"/>
    <property type="match status" value="1"/>
</dbReference>
<dbReference type="Gene3D" id="3.20.20.80">
    <property type="entry name" value="Glycosidases"/>
    <property type="match status" value="2"/>
</dbReference>
<dbReference type="Gene3D" id="2.60.40.1760">
    <property type="entry name" value="glycosyl hydrolase (family 31)"/>
    <property type="match status" value="1"/>
</dbReference>
<dbReference type="Gene3D" id="2.60.40.1180">
    <property type="entry name" value="Golgi alpha-mannosidase II"/>
    <property type="match status" value="2"/>
</dbReference>
<dbReference type="InterPro" id="IPR011013">
    <property type="entry name" value="Gal_mutarotase_sf_dom"/>
</dbReference>
<dbReference type="InterPro" id="IPR030458">
    <property type="entry name" value="Glyco_hydro_31_AS"/>
</dbReference>
<dbReference type="InterPro" id="IPR048395">
    <property type="entry name" value="Glyco_hydro_31_C"/>
</dbReference>
<dbReference type="InterPro" id="IPR025887">
    <property type="entry name" value="Glyco_hydro_31_N_dom"/>
</dbReference>
<dbReference type="InterPro" id="IPR000322">
    <property type="entry name" value="Glyco_hydro_31_TIM"/>
</dbReference>
<dbReference type="InterPro" id="IPR013780">
    <property type="entry name" value="Glyco_hydro_b"/>
</dbReference>
<dbReference type="InterPro" id="IPR017853">
    <property type="entry name" value="Glycoside_hydrolase_SF"/>
</dbReference>
<dbReference type="PANTHER" id="PTHR22762">
    <property type="entry name" value="ALPHA-GLUCOSIDASE"/>
    <property type="match status" value="1"/>
</dbReference>
<dbReference type="PANTHER" id="PTHR22762:SF60">
    <property type="entry name" value="NEUTRAL ALPHA-GLUCOSIDASE C"/>
    <property type="match status" value="1"/>
</dbReference>
<dbReference type="Pfam" id="PF13802">
    <property type="entry name" value="Gal_mutarotas_2"/>
    <property type="match status" value="1"/>
</dbReference>
<dbReference type="Pfam" id="PF01055">
    <property type="entry name" value="Glyco_hydro_31_2nd"/>
    <property type="match status" value="1"/>
</dbReference>
<dbReference type="Pfam" id="PF21365">
    <property type="entry name" value="Glyco_hydro_31_3rd"/>
    <property type="match status" value="1"/>
</dbReference>
<dbReference type="SUPFAM" id="SSF51445">
    <property type="entry name" value="(Trans)glycosidases"/>
    <property type="match status" value="1"/>
</dbReference>
<dbReference type="SUPFAM" id="SSF74650">
    <property type="entry name" value="Galactose mutarotase-like"/>
    <property type="match status" value="1"/>
</dbReference>
<dbReference type="SUPFAM" id="SSF51011">
    <property type="entry name" value="Glycosyl hydrolase domain"/>
    <property type="match status" value="1"/>
</dbReference>
<dbReference type="PROSITE" id="PS00129">
    <property type="entry name" value="GLYCOSYL_HYDROL_F31_1"/>
    <property type="match status" value="1"/>
</dbReference>
<evidence type="ECO:0000250" key="1"/>
<evidence type="ECO:0000255" key="2">
    <source>
        <dbReference type="PROSITE-ProRule" id="PRU10066"/>
    </source>
</evidence>
<evidence type="ECO:0000256" key="3">
    <source>
        <dbReference type="SAM" id="MobiDB-lite"/>
    </source>
</evidence>
<evidence type="ECO:0000303" key="4">
    <source>
    </source>
</evidence>
<evidence type="ECO:0000305" key="5"/>